<name>RL13_ECOHS</name>
<accession>A8A540</accession>
<proteinExistence type="inferred from homology"/>
<evidence type="ECO:0000255" key="1">
    <source>
        <dbReference type="HAMAP-Rule" id="MF_01366"/>
    </source>
</evidence>
<evidence type="ECO:0000305" key="2"/>
<dbReference type="EMBL" id="CP000802">
    <property type="protein sequence ID" value="ABV07644.1"/>
    <property type="molecule type" value="Genomic_DNA"/>
</dbReference>
<dbReference type="RefSeq" id="WP_000847559.1">
    <property type="nucleotide sequence ID" value="NC_009800.1"/>
</dbReference>
<dbReference type="SMR" id="A8A540"/>
<dbReference type="GeneID" id="89518067"/>
<dbReference type="KEGG" id="ecx:EcHS_A3420"/>
<dbReference type="HOGENOM" id="CLU_082184_2_2_6"/>
<dbReference type="GO" id="GO:0022625">
    <property type="term" value="C:cytosolic large ribosomal subunit"/>
    <property type="evidence" value="ECO:0007669"/>
    <property type="project" value="TreeGrafter"/>
</dbReference>
<dbReference type="GO" id="GO:0003729">
    <property type="term" value="F:mRNA binding"/>
    <property type="evidence" value="ECO:0007669"/>
    <property type="project" value="TreeGrafter"/>
</dbReference>
<dbReference type="GO" id="GO:0003735">
    <property type="term" value="F:structural constituent of ribosome"/>
    <property type="evidence" value="ECO:0007669"/>
    <property type="project" value="InterPro"/>
</dbReference>
<dbReference type="GO" id="GO:0017148">
    <property type="term" value="P:negative regulation of translation"/>
    <property type="evidence" value="ECO:0007669"/>
    <property type="project" value="TreeGrafter"/>
</dbReference>
<dbReference type="GO" id="GO:0006412">
    <property type="term" value="P:translation"/>
    <property type="evidence" value="ECO:0007669"/>
    <property type="project" value="UniProtKB-UniRule"/>
</dbReference>
<dbReference type="CDD" id="cd00392">
    <property type="entry name" value="Ribosomal_L13"/>
    <property type="match status" value="1"/>
</dbReference>
<dbReference type="FunFam" id="3.90.1180.10:FF:000001">
    <property type="entry name" value="50S ribosomal protein L13"/>
    <property type="match status" value="1"/>
</dbReference>
<dbReference type="Gene3D" id="3.90.1180.10">
    <property type="entry name" value="Ribosomal protein L13"/>
    <property type="match status" value="1"/>
</dbReference>
<dbReference type="HAMAP" id="MF_01366">
    <property type="entry name" value="Ribosomal_uL13"/>
    <property type="match status" value="1"/>
</dbReference>
<dbReference type="InterPro" id="IPR005822">
    <property type="entry name" value="Ribosomal_uL13"/>
</dbReference>
<dbReference type="InterPro" id="IPR005823">
    <property type="entry name" value="Ribosomal_uL13_bac-type"/>
</dbReference>
<dbReference type="InterPro" id="IPR023563">
    <property type="entry name" value="Ribosomal_uL13_CS"/>
</dbReference>
<dbReference type="InterPro" id="IPR036899">
    <property type="entry name" value="Ribosomal_uL13_sf"/>
</dbReference>
<dbReference type="NCBIfam" id="TIGR01066">
    <property type="entry name" value="rplM_bact"/>
    <property type="match status" value="1"/>
</dbReference>
<dbReference type="PANTHER" id="PTHR11545:SF2">
    <property type="entry name" value="LARGE RIBOSOMAL SUBUNIT PROTEIN UL13M"/>
    <property type="match status" value="1"/>
</dbReference>
<dbReference type="PANTHER" id="PTHR11545">
    <property type="entry name" value="RIBOSOMAL PROTEIN L13"/>
    <property type="match status" value="1"/>
</dbReference>
<dbReference type="Pfam" id="PF00572">
    <property type="entry name" value="Ribosomal_L13"/>
    <property type="match status" value="1"/>
</dbReference>
<dbReference type="PIRSF" id="PIRSF002181">
    <property type="entry name" value="Ribosomal_L13"/>
    <property type="match status" value="1"/>
</dbReference>
<dbReference type="SUPFAM" id="SSF52161">
    <property type="entry name" value="Ribosomal protein L13"/>
    <property type="match status" value="1"/>
</dbReference>
<dbReference type="PROSITE" id="PS00783">
    <property type="entry name" value="RIBOSOMAL_L13"/>
    <property type="match status" value="1"/>
</dbReference>
<gene>
    <name evidence="1" type="primary">rplM</name>
    <name type="ordered locus">EcHS_A3420</name>
</gene>
<protein>
    <recommendedName>
        <fullName evidence="1">Large ribosomal subunit protein uL13</fullName>
    </recommendedName>
    <alternativeName>
        <fullName evidence="2">50S ribosomal protein L13</fullName>
    </alternativeName>
</protein>
<comment type="function">
    <text evidence="1">This protein is one of the early assembly proteins of the 50S ribosomal subunit, although it is not seen to bind rRNA by itself. It is important during the early stages of 50S assembly.</text>
</comment>
<comment type="subunit">
    <text evidence="1">Part of the 50S ribosomal subunit.</text>
</comment>
<comment type="similarity">
    <text evidence="1">Belongs to the universal ribosomal protein uL13 family.</text>
</comment>
<sequence>MKTFTAKPETVKRDWYVVDATGKTLGRLATELARRLRGKHKAEYTPHVDTGDYIIVLNADKVAVTGNKRTDKVYYHHTGHIGGIKQATFEEMIARRPERVIEIAVKGMLPKGPLGRAMFRKLKVYAGNEHNHAAQQPQVLDI</sequence>
<keyword id="KW-0687">Ribonucleoprotein</keyword>
<keyword id="KW-0689">Ribosomal protein</keyword>
<reference key="1">
    <citation type="journal article" date="2008" name="J. Bacteriol.">
        <title>The pangenome structure of Escherichia coli: comparative genomic analysis of E. coli commensal and pathogenic isolates.</title>
        <authorList>
            <person name="Rasko D.A."/>
            <person name="Rosovitz M.J."/>
            <person name="Myers G.S.A."/>
            <person name="Mongodin E.F."/>
            <person name="Fricke W.F."/>
            <person name="Gajer P."/>
            <person name="Crabtree J."/>
            <person name="Sebaihia M."/>
            <person name="Thomson N.R."/>
            <person name="Chaudhuri R."/>
            <person name="Henderson I.R."/>
            <person name="Sperandio V."/>
            <person name="Ravel J."/>
        </authorList>
    </citation>
    <scope>NUCLEOTIDE SEQUENCE [LARGE SCALE GENOMIC DNA]</scope>
    <source>
        <strain>HS</strain>
    </source>
</reference>
<feature type="chain" id="PRO_1000067993" description="Large ribosomal subunit protein uL13">
    <location>
        <begin position="1"/>
        <end position="142"/>
    </location>
</feature>
<organism>
    <name type="scientific">Escherichia coli O9:H4 (strain HS)</name>
    <dbReference type="NCBI Taxonomy" id="331112"/>
    <lineage>
        <taxon>Bacteria</taxon>
        <taxon>Pseudomonadati</taxon>
        <taxon>Pseudomonadota</taxon>
        <taxon>Gammaproteobacteria</taxon>
        <taxon>Enterobacterales</taxon>
        <taxon>Enterobacteriaceae</taxon>
        <taxon>Escherichia</taxon>
    </lineage>
</organism>